<proteinExistence type="evidence at protein level"/>
<accession>P28374</accession>
<comment type="function">
    <text evidence="2 3 4 5 6 7 8 9 10 11">Exhibits vasodilator, natriuretic and diuretic properties in animal models and human tissues. Acts by stimulating cGMP via the natriuretic peptide receptor 1 (NPR1) (PubMed:16778132). Is a poor agonist of the atrial natriuretic peptide receptor 2 (NPR2). Is not degraded by neutral endopeptidase (NEP/MME). Binds to atrial natriuretic peptide clearance receptor (NPR-C/NPR3), which may be responsible of the removal of DNP from the circulation (PubMed:17475216). Increases calcium uptake and induces histamine release from rat peritoneal mast cells. Increases calcium-activated potassium (KCa) current in gastric antral circular smooth muscle cells by increasing cGMP production and activating inositol trisphosphate receptors (IP3Rs) (PubMed:18096107). In vivo, reduces both systolic and diastolic blood pressure with no effect on heart rate, when intravenously injected in conscious rabbits (PubMed:37049825).</text>
</comment>
<comment type="subcellular location">
    <subcellularLocation>
        <location evidence="7">Secreted</location>
    </subcellularLocation>
</comment>
<comment type="tissue specificity">
    <text evidence="14">Expressed by the venom gland.</text>
</comment>
<comment type="pharmaceutical">
    <text evidence="15">Cenderitide, a chimeric peptide consisting of C-type natriuretic peptide (NPPC) fused to the C-terminal tail of Dendroaspis natriuretic peptide (DNP) is under phase II clinical trial to treat heart failure (HF) with reduced ejection fraction (HFrEF) and HF with preserved ejection fraction (HFpEF). unlike the 2 peptides from which it is derived, Cenderitide activates both NPR1 and NPR2.</text>
</comment>
<comment type="similarity">
    <text evidence="13">Belongs to the natriuretic peptide family.</text>
</comment>
<dbReference type="PIR" id="A42974">
    <property type="entry name" value="A42974"/>
</dbReference>
<dbReference type="PDB" id="7BRI">
    <property type="method" value="X-ray"/>
    <property type="resolution" value="2.45 A"/>
    <property type="chains" value="L=1-38"/>
</dbReference>
<dbReference type="PDBsum" id="7BRI"/>
<dbReference type="SMR" id="P28374"/>
<dbReference type="GO" id="GO:0005576">
    <property type="term" value="C:extracellular region"/>
    <property type="evidence" value="ECO:0007669"/>
    <property type="project" value="UniProtKB-SubCell"/>
</dbReference>
<dbReference type="GO" id="GO:0005179">
    <property type="term" value="F:hormone activity"/>
    <property type="evidence" value="ECO:0007669"/>
    <property type="project" value="InterPro"/>
</dbReference>
<dbReference type="GO" id="GO:0015459">
    <property type="term" value="F:potassium channel regulator activity"/>
    <property type="evidence" value="ECO:0007669"/>
    <property type="project" value="UniProtKB-KW"/>
</dbReference>
<dbReference type="GO" id="GO:0090729">
    <property type="term" value="F:toxin activity"/>
    <property type="evidence" value="ECO:0007669"/>
    <property type="project" value="UniProtKB-KW"/>
</dbReference>
<dbReference type="GO" id="GO:0008217">
    <property type="term" value="P:regulation of blood pressure"/>
    <property type="evidence" value="ECO:0007669"/>
    <property type="project" value="UniProtKB-KW"/>
</dbReference>
<dbReference type="GO" id="GO:0042311">
    <property type="term" value="P:vasodilation"/>
    <property type="evidence" value="ECO:0007669"/>
    <property type="project" value="UniProtKB-KW"/>
</dbReference>
<dbReference type="InterPro" id="IPR000663">
    <property type="entry name" value="Natr_peptide"/>
</dbReference>
<dbReference type="InterPro" id="IPR030480">
    <property type="entry name" value="Natr_peptide_CS"/>
</dbReference>
<dbReference type="Pfam" id="PF00212">
    <property type="entry name" value="ANP"/>
    <property type="match status" value="1"/>
</dbReference>
<dbReference type="PROSITE" id="PS00263">
    <property type="entry name" value="NATRIURETIC_PEPTIDE"/>
    <property type="match status" value="1"/>
</dbReference>
<reference key="1">
    <citation type="journal article" date="1992" name="J. Biol. Chem.">
        <title>A new member of the natriuretic peptide family is present in the venom of the green mamba (Dendroaspis angusticeps).</title>
        <authorList>
            <person name="Schweitz H."/>
            <person name="Vigne P."/>
            <person name="Moinier D."/>
            <person name="Frelin C."/>
            <person name="Lazdunski M."/>
        </authorList>
    </citation>
    <scope>PROTEIN SEQUENCE</scope>
    <scope>FUNCTION</scope>
    <scope>SUBCELLULAR LOCATION</scope>
    <source>
        <tissue>Venom</tissue>
    </source>
</reference>
<reference key="2">
    <citation type="journal article" date="1999" name="Kidney Int.">
        <title>Renal actions of synthetic dendroaspis natriuretic peptide.</title>
        <authorList>
            <person name="Lisy O."/>
            <person name="Jougasaki M."/>
            <person name="Heublein D.M."/>
            <person name="Schirger J.A."/>
            <person name="Chen H.H."/>
            <person name="Wennberg P.W."/>
            <person name="Burnett J.C."/>
        </authorList>
    </citation>
    <scope>FUNCTION</scope>
</reference>
<reference key="3">
    <citation type="journal article" date="2000" name="J. Cardiovasc. Pharmacol.">
        <title>Mechanism of relaxations to dendroaspis natriuretic peptide in canine coronary arteries.</title>
        <authorList>
            <person name="Collins E."/>
            <person name="Bracamonte M.P."/>
            <person name="Burnett J.C. Jr."/>
            <person name="Miller V.M."/>
        </authorList>
    </citation>
    <scope>FUNCTION</scope>
</reference>
<reference key="4">
    <citation type="journal article" date="2001" name="Hypertension">
        <title>Therapeutic actions of a new synthetic vasoactive and natriuretic peptide, dendroaspis natriuretic peptide, in experimental severe congestive heart failure.</title>
        <authorList>
            <person name="Lisy O."/>
            <person name="Lainchbury J.G."/>
            <person name="Leskinen H."/>
            <person name="Burnett J.C. Jr."/>
        </authorList>
    </citation>
    <scope>FUNCTION</scope>
</reference>
<reference key="5">
    <citation type="journal article" date="2001" name="Peptides">
        <title>Histamine release induced by dendroaspis natriuretic peptide from rat mast cells.</title>
        <authorList>
            <person name="Chai O.H."/>
            <person name="Kim E.K."/>
            <person name="Lee Y.H."/>
            <person name="Kim J.G."/>
            <person name="Baik B.J."/>
            <person name="Lee M.S."/>
            <person name="Han E.H."/>
            <person name="Kim H.T."/>
            <person name="Song C.H."/>
        </authorList>
    </citation>
    <scope>FUNCTION</scope>
</reference>
<reference key="6">
    <citation type="journal article" date="2002" name="Cardiovasc. Res.">
        <title>Dendroaspis natriuretic peptide relaxes isolated human arteries and veins.</title>
        <authorList>
            <person name="Best P.J."/>
            <person name="Burnett J.C."/>
            <person name="Wilson S.H."/>
            <person name="Holmes D.R. Jr."/>
            <person name="Lerman A."/>
        </authorList>
    </citation>
    <scope>FUNCTION</scope>
</reference>
<reference key="7">
    <citation type="journal article" date="2002" name="J. Am. Coll. Cardiol.">
        <title>Natriuretic peptide receptors and neutral endopeptidase in mediating the renal actions of a new therapeutic synthetic natriuretic peptide dendroaspis natriuretic peptide.</title>
        <authorList>
            <person name="Chen H.H."/>
            <person name="Lainchbury J.G."/>
            <person name="Burnett J.C. Jr."/>
        </authorList>
    </citation>
    <scope>DEGRADATION OF DNP</scope>
</reference>
<reference key="8">
    <citation type="journal article" date="2006" name="Circ. Res.">
        <title>Novel snake venom ligand dendroaspis natriuretic peptide is selective for natriuretic peptide receptor-A in human heart: downregulation of natriuretic peptide receptor-A in heart failure.</title>
        <authorList>
            <person name="Singh G."/>
            <person name="Kuc R.E."/>
            <person name="Maguire J.J."/>
            <person name="Fidock M."/>
            <person name="Davenport A.P."/>
        </authorList>
    </citation>
    <scope>FUNCTION</scope>
    <scope>NPR1 BINDING</scope>
</reference>
<reference key="9">
    <citation type="journal article" date="2007" name="Biochem. Biophys. Res. Commun.">
        <title>Dendroaspis natriuretic peptide binds to the natriuretic peptide clearance receptor.</title>
        <authorList>
            <person name="Johns D.G."/>
            <person name="Ao Z."/>
            <person name="Heidrich B.J."/>
            <person name="Hunsberger G.E."/>
            <person name="Graham T."/>
            <person name="Payne L."/>
            <person name="Elshourbagy N."/>
            <person name="Lu Q."/>
            <person name="Aiyar N."/>
            <person name="Douglas S.A."/>
        </authorList>
    </citation>
    <scope>FUNCTION</scope>
    <scope>NPR3 BINDING</scope>
</reference>
<reference key="10">
    <citation type="journal article" date="2008" name="J. Physiol. Sci.">
        <title>Effects of dendroaspis natriuretic peptide on calcium-activated potassium current and its mechanism.</title>
        <authorList>
            <person name="Guo H.-S."/>
            <person name="Yang Y.-Z."/>
            <person name="Zou Y."/>
            <person name="Xu J."/>
            <person name="Cai Z.-X."/>
            <person name="Qi Q.-H."/>
        </authorList>
    </citation>
    <scope>FUNCTION ON POTASSIUM CHANNEL</scope>
</reference>
<reference key="11">
    <citation type="journal article" date="2023" name="Molecules">
        <title>Taipan natriuretic peptides are potent and selective agonists for the natriuretic peptide receptor A.</title>
        <authorList>
            <person name="Vink S."/>
            <person name="Akondi K.B."/>
            <person name="Jin J."/>
            <person name="Poth K."/>
            <person name="Torres A.M."/>
            <person name="Kuchel P.W."/>
            <person name="Burke S.L."/>
            <person name="Head G.A."/>
            <person name="Alewood P.F."/>
        </authorList>
    </citation>
    <scope>FUNCTION</scope>
</reference>
<reference key="12">
    <citation type="journal article" date="2019" name="Int. J. Cardiol.">
        <title>Natriuretic peptide based therapeutics for heart failure: cenderitide: a novel first-in-class designer natriuretic peptide.</title>
        <authorList>
            <person name="Ichiki T."/>
            <person name="Dzhoyashvili N."/>
            <person name="Burnett J.C. Jr."/>
        </authorList>
    </citation>
    <scope>PHARMACEUTICAL</scope>
    <scope>REVIEW</scope>
</reference>
<evidence type="ECO:0000256" key="1">
    <source>
        <dbReference type="SAM" id="MobiDB-lite"/>
    </source>
</evidence>
<evidence type="ECO:0000269" key="2">
    <source>
    </source>
</evidence>
<evidence type="ECO:0000269" key="3">
    <source>
    </source>
</evidence>
<evidence type="ECO:0000269" key="4">
    <source>
    </source>
</evidence>
<evidence type="ECO:0000269" key="5">
    <source>
    </source>
</evidence>
<evidence type="ECO:0000269" key="6">
    <source>
    </source>
</evidence>
<evidence type="ECO:0000269" key="7">
    <source>
    </source>
</evidence>
<evidence type="ECO:0000269" key="8">
    <source>
    </source>
</evidence>
<evidence type="ECO:0000269" key="9">
    <source>
    </source>
</evidence>
<evidence type="ECO:0000269" key="10">
    <source>
    </source>
</evidence>
<evidence type="ECO:0000269" key="11">
    <source>
    </source>
</evidence>
<evidence type="ECO:0000303" key="12">
    <source>
    </source>
</evidence>
<evidence type="ECO:0000305" key="13"/>
<evidence type="ECO:0000305" key="14">
    <source>
    </source>
</evidence>
<evidence type="ECO:0000305" key="15">
    <source>
    </source>
</evidence>
<evidence type="ECO:0007744" key="16">
    <source>
        <dbReference type="PDB" id="7BRI"/>
    </source>
</evidence>
<evidence type="ECO:0007829" key="17">
    <source>
        <dbReference type="PDB" id="7BRI"/>
    </source>
</evidence>
<organism>
    <name type="scientific">Dendroaspis angusticeps</name>
    <name type="common">Eastern green mamba</name>
    <name type="synonym">Naja angusticeps</name>
    <dbReference type="NCBI Taxonomy" id="8618"/>
    <lineage>
        <taxon>Eukaryota</taxon>
        <taxon>Metazoa</taxon>
        <taxon>Chordata</taxon>
        <taxon>Craniata</taxon>
        <taxon>Vertebrata</taxon>
        <taxon>Euteleostomi</taxon>
        <taxon>Lepidosauria</taxon>
        <taxon>Squamata</taxon>
        <taxon>Bifurcata</taxon>
        <taxon>Unidentata</taxon>
        <taxon>Episquamata</taxon>
        <taxon>Toxicofera</taxon>
        <taxon>Serpentes</taxon>
        <taxon>Colubroidea</taxon>
        <taxon>Elapidae</taxon>
        <taxon>Elapinae</taxon>
        <taxon>Dendroaspis</taxon>
    </lineage>
</organism>
<sequence length="38" mass="4193">EVKYDPCFGHKIDRINHVSNLGCPSLRDPRPNAPSTSA</sequence>
<protein>
    <recommendedName>
        <fullName evidence="12">Natriuretic peptide DNP</fullName>
    </recommendedName>
</protein>
<keyword id="KW-0002">3D-structure</keyword>
<keyword id="KW-1221">Calcium-activated potassium channel impairing toxin</keyword>
<keyword id="KW-0903">Direct protein sequencing</keyword>
<keyword id="KW-1015">Disulfide bond</keyword>
<keyword id="KW-0382">Hypotensive agent</keyword>
<keyword id="KW-0872">Ion channel impairing toxin</keyword>
<keyword id="KW-0582">Pharmaceutical</keyword>
<keyword id="KW-0632">Potassium channel impairing toxin</keyword>
<keyword id="KW-0964">Secreted</keyword>
<keyword id="KW-0800">Toxin</keyword>
<keyword id="KW-0838">Vasoactive</keyword>
<keyword id="KW-0840">Vasodilator</keyword>
<name>VNP_DENAN</name>
<feature type="peptide" id="PRO_0000045068" description="Natriuretic peptide DNP" evidence="7">
    <location>
        <begin position="1"/>
        <end position="38"/>
    </location>
</feature>
<feature type="region of interest" description="Disordered" evidence="1">
    <location>
        <begin position="19"/>
        <end position="38"/>
    </location>
</feature>
<feature type="disulfide bond" evidence="16">
    <location>
        <begin position="7"/>
        <end position="23"/>
    </location>
</feature>
<feature type="helix" evidence="17">
    <location>
        <begin position="14"/>
        <end position="17"/>
    </location>
</feature>